<feature type="chain" id="PRO_0000336421" description="Thiamine-phosphate synthase">
    <location>
        <begin position="1"/>
        <end position="213"/>
    </location>
</feature>
<feature type="binding site" evidence="1">
    <location>
        <begin position="43"/>
        <end position="47"/>
    </location>
    <ligand>
        <name>4-amino-2-methyl-5-(diphosphooxymethyl)pyrimidine</name>
        <dbReference type="ChEBI" id="CHEBI:57841"/>
    </ligand>
</feature>
<feature type="binding site" evidence="1">
    <location>
        <position position="74"/>
    </location>
    <ligand>
        <name>4-amino-2-methyl-5-(diphosphooxymethyl)pyrimidine</name>
        <dbReference type="ChEBI" id="CHEBI:57841"/>
    </ligand>
</feature>
<feature type="binding site" evidence="1">
    <location>
        <position position="75"/>
    </location>
    <ligand>
        <name>Mg(2+)</name>
        <dbReference type="ChEBI" id="CHEBI:18420"/>
    </ligand>
</feature>
<feature type="binding site" evidence="1">
    <location>
        <position position="94"/>
    </location>
    <ligand>
        <name>Mg(2+)</name>
        <dbReference type="ChEBI" id="CHEBI:18420"/>
    </ligand>
</feature>
<feature type="binding site" evidence="1">
    <location>
        <position position="113"/>
    </location>
    <ligand>
        <name>4-amino-2-methyl-5-(diphosphooxymethyl)pyrimidine</name>
        <dbReference type="ChEBI" id="CHEBI:57841"/>
    </ligand>
</feature>
<feature type="binding site" evidence="1">
    <location>
        <begin position="142"/>
        <end position="144"/>
    </location>
    <ligand>
        <name>2-[(2R,5Z)-2-carboxy-4-methylthiazol-5(2H)-ylidene]ethyl phosphate</name>
        <dbReference type="ChEBI" id="CHEBI:62899"/>
    </ligand>
</feature>
<feature type="binding site" evidence="1">
    <location>
        <position position="145"/>
    </location>
    <ligand>
        <name>4-amino-2-methyl-5-(diphosphooxymethyl)pyrimidine</name>
        <dbReference type="ChEBI" id="CHEBI:57841"/>
    </ligand>
</feature>
<feature type="binding site" evidence="1">
    <location>
        <position position="173"/>
    </location>
    <ligand>
        <name>2-[(2R,5Z)-2-carboxy-4-methylthiazol-5(2H)-ylidene]ethyl phosphate</name>
        <dbReference type="ChEBI" id="CHEBI:62899"/>
    </ligand>
</feature>
<feature type="binding site" evidence="1">
    <location>
        <begin position="193"/>
        <end position="194"/>
    </location>
    <ligand>
        <name>2-[(2R,5Z)-2-carboxy-4-methylthiazol-5(2H)-ylidene]ethyl phosphate</name>
        <dbReference type="ChEBI" id="CHEBI:62899"/>
    </ligand>
</feature>
<name>THIE_PSYWF</name>
<organism>
    <name type="scientific">Psychrobacter sp. (strain PRwf-1)</name>
    <dbReference type="NCBI Taxonomy" id="349106"/>
    <lineage>
        <taxon>Bacteria</taxon>
        <taxon>Pseudomonadati</taxon>
        <taxon>Pseudomonadota</taxon>
        <taxon>Gammaproteobacteria</taxon>
        <taxon>Moraxellales</taxon>
        <taxon>Moraxellaceae</taxon>
        <taxon>Psychrobacter</taxon>
    </lineage>
</organism>
<comment type="function">
    <text evidence="1">Condenses 4-methyl-5-(beta-hydroxyethyl)thiazole monophosphate (THZ-P) and 2-methyl-4-amino-5-hydroxymethyl pyrimidine pyrophosphate (HMP-PP) to form thiamine monophosphate (TMP).</text>
</comment>
<comment type="catalytic activity">
    <reaction evidence="1">
        <text>2-[(2R,5Z)-2-carboxy-4-methylthiazol-5(2H)-ylidene]ethyl phosphate + 4-amino-2-methyl-5-(diphosphooxymethyl)pyrimidine + 2 H(+) = thiamine phosphate + CO2 + diphosphate</text>
        <dbReference type="Rhea" id="RHEA:47844"/>
        <dbReference type="ChEBI" id="CHEBI:15378"/>
        <dbReference type="ChEBI" id="CHEBI:16526"/>
        <dbReference type="ChEBI" id="CHEBI:33019"/>
        <dbReference type="ChEBI" id="CHEBI:37575"/>
        <dbReference type="ChEBI" id="CHEBI:57841"/>
        <dbReference type="ChEBI" id="CHEBI:62899"/>
        <dbReference type="EC" id="2.5.1.3"/>
    </reaction>
</comment>
<comment type="catalytic activity">
    <reaction evidence="1">
        <text>2-(2-carboxy-4-methylthiazol-5-yl)ethyl phosphate + 4-amino-2-methyl-5-(diphosphooxymethyl)pyrimidine + 2 H(+) = thiamine phosphate + CO2 + diphosphate</text>
        <dbReference type="Rhea" id="RHEA:47848"/>
        <dbReference type="ChEBI" id="CHEBI:15378"/>
        <dbReference type="ChEBI" id="CHEBI:16526"/>
        <dbReference type="ChEBI" id="CHEBI:33019"/>
        <dbReference type="ChEBI" id="CHEBI:37575"/>
        <dbReference type="ChEBI" id="CHEBI:57841"/>
        <dbReference type="ChEBI" id="CHEBI:62890"/>
        <dbReference type="EC" id="2.5.1.3"/>
    </reaction>
</comment>
<comment type="catalytic activity">
    <reaction evidence="1">
        <text>4-methyl-5-(2-phosphooxyethyl)-thiazole + 4-amino-2-methyl-5-(diphosphooxymethyl)pyrimidine + H(+) = thiamine phosphate + diphosphate</text>
        <dbReference type="Rhea" id="RHEA:22328"/>
        <dbReference type="ChEBI" id="CHEBI:15378"/>
        <dbReference type="ChEBI" id="CHEBI:33019"/>
        <dbReference type="ChEBI" id="CHEBI:37575"/>
        <dbReference type="ChEBI" id="CHEBI:57841"/>
        <dbReference type="ChEBI" id="CHEBI:58296"/>
        <dbReference type="EC" id="2.5.1.3"/>
    </reaction>
</comment>
<comment type="cofactor">
    <cofactor evidence="1">
        <name>Mg(2+)</name>
        <dbReference type="ChEBI" id="CHEBI:18420"/>
    </cofactor>
    <text evidence="1">Binds 1 Mg(2+) ion per subunit.</text>
</comment>
<comment type="pathway">
    <text evidence="1">Cofactor biosynthesis; thiamine diphosphate biosynthesis; thiamine phosphate from 4-amino-2-methyl-5-diphosphomethylpyrimidine and 4-methyl-5-(2-phosphoethyl)-thiazole: step 1/1.</text>
</comment>
<comment type="similarity">
    <text evidence="1">Belongs to the thiamine-phosphate synthase family.</text>
</comment>
<keyword id="KW-0460">Magnesium</keyword>
<keyword id="KW-0479">Metal-binding</keyword>
<keyword id="KW-0784">Thiamine biosynthesis</keyword>
<keyword id="KW-0808">Transferase</keyword>
<reference key="1">
    <citation type="submission" date="2007-05" db="EMBL/GenBank/DDBJ databases">
        <title>Complete sequence of chromosome of Psychrobacter sp. PRwf-1.</title>
        <authorList>
            <consortium name="US DOE Joint Genome Institute"/>
            <person name="Copeland A."/>
            <person name="Lucas S."/>
            <person name="Lapidus A."/>
            <person name="Barry K."/>
            <person name="Detter J.C."/>
            <person name="Glavina del Rio T."/>
            <person name="Hammon N."/>
            <person name="Israni S."/>
            <person name="Dalin E."/>
            <person name="Tice H."/>
            <person name="Pitluck S."/>
            <person name="Chain P."/>
            <person name="Malfatti S."/>
            <person name="Shin M."/>
            <person name="Vergez L."/>
            <person name="Schmutz J."/>
            <person name="Larimer F."/>
            <person name="Land M."/>
            <person name="Hauser L."/>
            <person name="Kyrpides N."/>
            <person name="Kim E."/>
            <person name="Tiedje J."/>
            <person name="Richardson P."/>
        </authorList>
    </citation>
    <scope>NUCLEOTIDE SEQUENCE [LARGE SCALE GENOMIC DNA]</scope>
    <source>
        <strain>PRwf-1</strain>
    </source>
</reference>
<protein>
    <recommendedName>
        <fullName evidence="1">Thiamine-phosphate synthase</fullName>
        <shortName evidence="1">TP synthase</shortName>
        <shortName evidence="1">TPS</shortName>
        <ecNumber evidence="1">2.5.1.3</ecNumber>
    </recommendedName>
    <alternativeName>
        <fullName evidence="1">Thiamine-phosphate pyrophosphorylase</fullName>
        <shortName evidence="1">TMP pyrophosphorylase</shortName>
        <shortName evidence="1">TMP-PPase</shortName>
    </alternativeName>
</protein>
<proteinExistence type="inferred from homology"/>
<accession>A5WDP0</accession>
<gene>
    <name evidence="1" type="primary">thiE</name>
    <name type="ordered locus">PsycPRwf_0829</name>
</gene>
<dbReference type="EC" id="2.5.1.3" evidence="1"/>
<dbReference type="EMBL" id="CP000713">
    <property type="protein sequence ID" value="ABQ93781.1"/>
    <property type="molecule type" value="Genomic_DNA"/>
</dbReference>
<dbReference type="SMR" id="A5WDP0"/>
<dbReference type="STRING" id="349106.PsycPRwf_0829"/>
<dbReference type="KEGG" id="prw:PsycPRwf_0829"/>
<dbReference type="eggNOG" id="COG0352">
    <property type="taxonomic scope" value="Bacteria"/>
</dbReference>
<dbReference type="HOGENOM" id="CLU_018272_3_2_6"/>
<dbReference type="UniPathway" id="UPA00060">
    <property type="reaction ID" value="UER00141"/>
</dbReference>
<dbReference type="GO" id="GO:0005737">
    <property type="term" value="C:cytoplasm"/>
    <property type="evidence" value="ECO:0007669"/>
    <property type="project" value="TreeGrafter"/>
</dbReference>
<dbReference type="GO" id="GO:0000287">
    <property type="term" value="F:magnesium ion binding"/>
    <property type="evidence" value="ECO:0007669"/>
    <property type="project" value="UniProtKB-UniRule"/>
</dbReference>
<dbReference type="GO" id="GO:0004789">
    <property type="term" value="F:thiamine-phosphate diphosphorylase activity"/>
    <property type="evidence" value="ECO:0007669"/>
    <property type="project" value="UniProtKB-UniRule"/>
</dbReference>
<dbReference type="GO" id="GO:0009228">
    <property type="term" value="P:thiamine biosynthetic process"/>
    <property type="evidence" value="ECO:0007669"/>
    <property type="project" value="UniProtKB-KW"/>
</dbReference>
<dbReference type="GO" id="GO:0009229">
    <property type="term" value="P:thiamine diphosphate biosynthetic process"/>
    <property type="evidence" value="ECO:0007669"/>
    <property type="project" value="UniProtKB-UniRule"/>
</dbReference>
<dbReference type="CDD" id="cd00564">
    <property type="entry name" value="TMP_TenI"/>
    <property type="match status" value="1"/>
</dbReference>
<dbReference type="FunFam" id="3.20.20.70:FF:000096">
    <property type="entry name" value="Thiamine-phosphate synthase"/>
    <property type="match status" value="1"/>
</dbReference>
<dbReference type="Gene3D" id="3.20.20.70">
    <property type="entry name" value="Aldolase class I"/>
    <property type="match status" value="1"/>
</dbReference>
<dbReference type="HAMAP" id="MF_00097">
    <property type="entry name" value="TMP_synthase"/>
    <property type="match status" value="1"/>
</dbReference>
<dbReference type="InterPro" id="IPR013785">
    <property type="entry name" value="Aldolase_TIM"/>
</dbReference>
<dbReference type="InterPro" id="IPR036206">
    <property type="entry name" value="ThiamineP_synth_sf"/>
</dbReference>
<dbReference type="InterPro" id="IPR022998">
    <property type="entry name" value="ThiamineP_synth_TenI"/>
</dbReference>
<dbReference type="InterPro" id="IPR034291">
    <property type="entry name" value="TMP_synthase"/>
</dbReference>
<dbReference type="NCBIfam" id="TIGR00693">
    <property type="entry name" value="thiE"/>
    <property type="match status" value="1"/>
</dbReference>
<dbReference type="PANTHER" id="PTHR20857:SF23">
    <property type="entry name" value="THIAMINE BIOSYNTHETIC BIFUNCTIONAL ENZYME"/>
    <property type="match status" value="1"/>
</dbReference>
<dbReference type="PANTHER" id="PTHR20857">
    <property type="entry name" value="THIAMINE-PHOSPHATE PYROPHOSPHORYLASE"/>
    <property type="match status" value="1"/>
</dbReference>
<dbReference type="Pfam" id="PF02581">
    <property type="entry name" value="TMP-TENI"/>
    <property type="match status" value="1"/>
</dbReference>
<dbReference type="SUPFAM" id="SSF51391">
    <property type="entry name" value="Thiamin phosphate synthase"/>
    <property type="match status" value="1"/>
</dbReference>
<evidence type="ECO:0000255" key="1">
    <source>
        <dbReference type="HAMAP-Rule" id="MF_00097"/>
    </source>
</evidence>
<sequence length="213" mass="22462">MNKHNKSADALSLYLVTDSALCADKGLIETVLAAIDGGVTLVQLRDKHASDEALYTTACELKEAIAGRVPLVINDKVQIAHKAKLDGAHIGQGDLSVKQARNILGHDAWLGLSINTLAQLQQTHHHHLDLLDYVGLGPVFATATKQDHAEPIGLEGLSTLSKASVLPTVAIGGINHANARQVYQTGCHGIAVVSAICAADDPKQAAELLIAQR</sequence>